<organism>
    <name type="scientific">Mus musculus</name>
    <name type="common">Mouse</name>
    <dbReference type="NCBI Taxonomy" id="10090"/>
    <lineage>
        <taxon>Eukaryota</taxon>
        <taxon>Metazoa</taxon>
        <taxon>Chordata</taxon>
        <taxon>Craniata</taxon>
        <taxon>Vertebrata</taxon>
        <taxon>Euteleostomi</taxon>
        <taxon>Mammalia</taxon>
        <taxon>Eutheria</taxon>
        <taxon>Euarchontoglires</taxon>
        <taxon>Glires</taxon>
        <taxon>Rodentia</taxon>
        <taxon>Myomorpha</taxon>
        <taxon>Muroidea</taxon>
        <taxon>Muridae</taxon>
        <taxon>Murinae</taxon>
        <taxon>Mus</taxon>
        <taxon>Mus</taxon>
    </lineage>
</organism>
<evidence type="ECO:0000250" key="1"/>
<evidence type="ECO:0000250" key="2">
    <source>
        <dbReference type="UniProtKB" id="P78411"/>
    </source>
</evidence>
<evidence type="ECO:0000255" key="3">
    <source>
        <dbReference type="PROSITE-ProRule" id="PRU00108"/>
    </source>
</evidence>
<evidence type="ECO:0000256" key="4">
    <source>
        <dbReference type="SAM" id="MobiDB-lite"/>
    </source>
</evidence>
<evidence type="ECO:0000269" key="5">
    <source>
    </source>
</evidence>
<evidence type="ECO:0000269" key="6">
    <source>
    </source>
</evidence>
<evidence type="ECO:0000269" key="7">
    <source>
    </source>
</evidence>
<evidence type="ECO:0000269" key="8">
    <source>
    </source>
</evidence>
<evidence type="ECO:0000305" key="9"/>
<name>IRX5_MOUSE</name>
<proteinExistence type="evidence at transcript level"/>
<accession>Q9JKQ4</accession>
<accession>Q80WV4</accession>
<accession>Q9JLL5</accession>
<protein>
    <recommendedName>
        <fullName>Iroquois-class homeodomain protein IRX-5</fullName>
    </recommendedName>
    <alternativeName>
        <fullName>Homeodomain protein IRXB2</fullName>
    </alternativeName>
    <alternativeName>
        <fullName>Iroquois homeobox protein 5</fullName>
    </alternativeName>
</protein>
<gene>
    <name type="primary">Irx5</name>
    <name type="synonym">Irxb2</name>
</gene>
<keyword id="KW-0238">DNA-binding</keyword>
<keyword id="KW-0371">Homeobox</keyword>
<keyword id="KW-0539">Nucleus</keyword>
<keyword id="KW-0597">Phosphoprotein</keyword>
<keyword id="KW-1185">Reference proteome</keyword>
<keyword id="KW-0716">Sensory transduction</keyword>
<keyword id="KW-0804">Transcription</keyword>
<keyword id="KW-0844">Vision</keyword>
<reference key="1">
    <citation type="journal article" date="2000" name="Dev. Biol.">
        <title>Patterning the embryonic heart: identification of five mouse Iroquois homeobox genes in the developing heart.</title>
        <authorList>
            <person name="Christoffels V.M."/>
            <person name="Keijser A.G.M."/>
            <person name="Houweling A.C."/>
            <person name="Clout D.E.W."/>
            <person name="Moorman A.F.M."/>
        </authorList>
    </citation>
    <scope>NUCLEOTIDE SEQUENCE [MRNA]</scope>
    <scope>DEVELOPMENTAL STAGE</scope>
    <source>
        <strain>FVB/N</strain>
        <tissue>Embryonic heart</tissue>
    </source>
</reference>
<reference key="2">
    <citation type="journal article" date="2000" name="Dev. Dyn.">
        <title>Identification of a novel mouse Iroquois homeobox gene, Irx5, and chromosomal localisation of all members of the mouse Iroquois gene family.</title>
        <authorList>
            <person name="Bosse A."/>
            <person name="Stoykova A."/>
            <person name="Nieselt-Struwe K."/>
            <person name="Chowdhury K."/>
            <person name="Copeland N.G."/>
            <person name="Jenkins N.A."/>
            <person name="Gruss P."/>
        </authorList>
    </citation>
    <scope>NUCLEOTIDE SEQUENCE [MRNA]</scope>
</reference>
<reference key="3">
    <citation type="journal article" date="2005" name="Science">
        <title>The transcriptional landscape of the mammalian genome.</title>
        <authorList>
            <person name="Carninci P."/>
            <person name="Kasukawa T."/>
            <person name="Katayama S."/>
            <person name="Gough J."/>
            <person name="Frith M.C."/>
            <person name="Maeda N."/>
            <person name="Oyama R."/>
            <person name="Ravasi T."/>
            <person name="Lenhard B."/>
            <person name="Wells C."/>
            <person name="Kodzius R."/>
            <person name="Shimokawa K."/>
            <person name="Bajic V.B."/>
            <person name="Brenner S.E."/>
            <person name="Batalov S."/>
            <person name="Forrest A.R."/>
            <person name="Zavolan M."/>
            <person name="Davis M.J."/>
            <person name="Wilming L.G."/>
            <person name="Aidinis V."/>
            <person name="Allen J.E."/>
            <person name="Ambesi-Impiombato A."/>
            <person name="Apweiler R."/>
            <person name="Aturaliya R.N."/>
            <person name="Bailey T.L."/>
            <person name="Bansal M."/>
            <person name="Baxter L."/>
            <person name="Beisel K.W."/>
            <person name="Bersano T."/>
            <person name="Bono H."/>
            <person name="Chalk A.M."/>
            <person name="Chiu K.P."/>
            <person name="Choudhary V."/>
            <person name="Christoffels A."/>
            <person name="Clutterbuck D.R."/>
            <person name="Crowe M.L."/>
            <person name="Dalla E."/>
            <person name="Dalrymple B.P."/>
            <person name="de Bono B."/>
            <person name="Della Gatta G."/>
            <person name="di Bernardo D."/>
            <person name="Down T."/>
            <person name="Engstrom P."/>
            <person name="Fagiolini M."/>
            <person name="Faulkner G."/>
            <person name="Fletcher C.F."/>
            <person name="Fukushima T."/>
            <person name="Furuno M."/>
            <person name="Futaki S."/>
            <person name="Gariboldi M."/>
            <person name="Georgii-Hemming P."/>
            <person name="Gingeras T.R."/>
            <person name="Gojobori T."/>
            <person name="Green R.E."/>
            <person name="Gustincich S."/>
            <person name="Harbers M."/>
            <person name="Hayashi Y."/>
            <person name="Hensch T.K."/>
            <person name="Hirokawa N."/>
            <person name="Hill D."/>
            <person name="Huminiecki L."/>
            <person name="Iacono M."/>
            <person name="Ikeo K."/>
            <person name="Iwama A."/>
            <person name="Ishikawa T."/>
            <person name="Jakt M."/>
            <person name="Kanapin A."/>
            <person name="Katoh M."/>
            <person name="Kawasawa Y."/>
            <person name="Kelso J."/>
            <person name="Kitamura H."/>
            <person name="Kitano H."/>
            <person name="Kollias G."/>
            <person name="Krishnan S.P."/>
            <person name="Kruger A."/>
            <person name="Kummerfeld S.K."/>
            <person name="Kurochkin I.V."/>
            <person name="Lareau L.F."/>
            <person name="Lazarevic D."/>
            <person name="Lipovich L."/>
            <person name="Liu J."/>
            <person name="Liuni S."/>
            <person name="McWilliam S."/>
            <person name="Madan Babu M."/>
            <person name="Madera M."/>
            <person name="Marchionni L."/>
            <person name="Matsuda H."/>
            <person name="Matsuzawa S."/>
            <person name="Miki H."/>
            <person name="Mignone F."/>
            <person name="Miyake S."/>
            <person name="Morris K."/>
            <person name="Mottagui-Tabar S."/>
            <person name="Mulder N."/>
            <person name="Nakano N."/>
            <person name="Nakauchi H."/>
            <person name="Ng P."/>
            <person name="Nilsson R."/>
            <person name="Nishiguchi S."/>
            <person name="Nishikawa S."/>
            <person name="Nori F."/>
            <person name="Ohara O."/>
            <person name="Okazaki Y."/>
            <person name="Orlando V."/>
            <person name="Pang K.C."/>
            <person name="Pavan W.J."/>
            <person name="Pavesi G."/>
            <person name="Pesole G."/>
            <person name="Petrovsky N."/>
            <person name="Piazza S."/>
            <person name="Reed J."/>
            <person name="Reid J.F."/>
            <person name="Ring B.Z."/>
            <person name="Ringwald M."/>
            <person name="Rost B."/>
            <person name="Ruan Y."/>
            <person name="Salzberg S.L."/>
            <person name="Sandelin A."/>
            <person name="Schneider C."/>
            <person name="Schoenbach C."/>
            <person name="Sekiguchi K."/>
            <person name="Semple C.A."/>
            <person name="Seno S."/>
            <person name="Sessa L."/>
            <person name="Sheng Y."/>
            <person name="Shibata Y."/>
            <person name="Shimada H."/>
            <person name="Shimada K."/>
            <person name="Silva D."/>
            <person name="Sinclair B."/>
            <person name="Sperling S."/>
            <person name="Stupka E."/>
            <person name="Sugiura K."/>
            <person name="Sultana R."/>
            <person name="Takenaka Y."/>
            <person name="Taki K."/>
            <person name="Tammoja K."/>
            <person name="Tan S.L."/>
            <person name="Tang S."/>
            <person name="Taylor M.S."/>
            <person name="Tegner J."/>
            <person name="Teichmann S.A."/>
            <person name="Ueda H.R."/>
            <person name="van Nimwegen E."/>
            <person name="Verardo R."/>
            <person name="Wei C.L."/>
            <person name="Yagi K."/>
            <person name="Yamanishi H."/>
            <person name="Zabarovsky E."/>
            <person name="Zhu S."/>
            <person name="Zimmer A."/>
            <person name="Hide W."/>
            <person name="Bult C."/>
            <person name="Grimmond S.M."/>
            <person name="Teasdale R.D."/>
            <person name="Liu E.T."/>
            <person name="Brusic V."/>
            <person name="Quackenbush J."/>
            <person name="Wahlestedt C."/>
            <person name="Mattick J.S."/>
            <person name="Hume D.A."/>
            <person name="Kai C."/>
            <person name="Sasaki D."/>
            <person name="Tomaru Y."/>
            <person name="Fukuda S."/>
            <person name="Kanamori-Katayama M."/>
            <person name="Suzuki M."/>
            <person name="Aoki J."/>
            <person name="Arakawa T."/>
            <person name="Iida J."/>
            <person name="Imamura K."/>
            <person name="Itoh M."/>
            <person name="Kato T."/>
            <person name="Kawaji H."/>
            <person name="Kawagashira N."/>
            <person name="Kawashima T."/>
            <person name="Kojima M."/>
            <person name="Kondo S."/>
            <person name="Konno H."/>
            <person name="Nakano K."/>
            <person name="Ninomiya N."/>
            <person name="Nishio T."/>
            <person name="Okada M."/>
            <person name="Plessy C."/>
            <person name="Shibata K."/>
            <person name="Shiraki T."/>
            <person name="Suzuki S."/>
            <person name="Tagami M."/>
            <person name="Waki K."/>
            <person name="Watahiki A."/>
            <person name="Okamura-Oho Y."/>
            <person name="Suzuki H."/>
            <person name="Kawai J."/>
            <person name="Hayashizaki Y."/>
        </authorList>
    </citation>
    <scope>NUCLEOTIDE SEQUENCE [LARGE SCALE MRNA]</scope>
    <source>
        <strain>C57BL/6J</strain>
        <tissue>Lung</tissue>
    </source>
</reference>
<reference key="4">
    <citation type="journal article" date="2004" name="Genome Res.">
        <title>The status, quality, and expansion of the NIH full-length cDNA project: the Mammalian Gene Collection (MGC).</title>
        <authorList>
            <consortium name="The MGC Project Team"/>
        </authorList>
    </citation>
    <scope>NUCLEOTIDE SEQUENCE [LARGE SCALE MRNA]</scope>
    <source>
        <strain>C57BL/6J</strain>
        <tissue>Brain</tissue>
    </source>
</reference>
<reference key="5">
    <citation type="journal article" date="2000" name="Mech. Dev.">
        <title>Expression of two novel mouse Iroquois-class homeobox genes during neurogenesis.</title>
        <authorList>
            <person name="Cohen D.R."/>
            <person name="Cheng C.W."/>
            <person name="Cheng S.H."/>
            <person name="Hui C.-C."/>
        </authorList>
    </citation>
    <scope>NUCLEOTIDE SEQUENCE [MRNA] OF 1-442</scope>
    <scope>DEVELOPMENTAL STAGE</scope>
    <source>
        <tissue>Brain</tissue>
    </source>
</reference>
<reference key="6">
    <citation type="journal article" date="2005" name="Cell">
        <title>The homeodomain transcription factor Irx5 establishes the mouse cardiac ventricular repolarization gradient.</title>
        <authorList>
            <person name="Costantini D.L."/>
            <person name="Arruda E.P."/>
            <person name="Agarwal P."/>
            <person name="Kim K.-H."/>
            <person name="Zhu Y."/>
            <person name="Zhu W."/>
            <person name="Lebel M."/>
            <person name="Cheng C.W."/>
            <person name="Park C.Y."/>
            <person name="Pierce S.A."/>
            <person name="Guerchicoff A."/>
            <person name="Pollevick G.D."/>
            <person name="Chan T.Y."/>
            <person name="Kabir M.G."/>
            <person name="Cheng S.H."/>
            <person name="Husain M."/>
            <person name="Antzelevitch C."/>
            <person name="Srivastava D."/>
            <person name="Gross G.J."/>
            <person name="Hui C.C."/>
            <person name="Backx P.H."/>
            <person name="Bruneau B.G."/>
        </authorList>
    </citation>
    <scope>DISRUPTION PHENOTYPE</scope>
    <scope>POSSIBLE FUNCTION</scope>
</reference>
<reference key="7">
    <citation type="journal article" date="2005" name="Dev. Biol.">
        <title>The Iroquois homeobox gene, Irx5, is required for retinal cone bipolar cell development.</title>
        <authorList>
            <person name="Cheng C.W."/>
            <person name="Chow R.L."/>
            <person name="Lebel M."/>
            <person name="Sakuma R."/>
            <person name="Cheung H.O.-L."/>
            <person name="Thanabalasingham V."/>
            <person name="Zhang X."/>
            <person name="Bruneau B.G."/>
            <person name="Birch D.G."/>
            <person name="Hui C.C."/>
            <person name="McInnes R.R."/>
            <person name="Cheng S.H."/>
        </authorList>
    </citation>
    <scope>POSSIBLE FUNCTION</scope>
    <scope>DEVELOPMENTAL STAGE</scope>
</reference>
<reference key="8">
    <citation type="journal article" date="2007" name="Genes Dev.">
        <title>The prepattern transcription factor Irx3 directs nephron segment identity.</title>
        <authorList>
            <person name="Reggiani L."/>
            <person name="Raciti D."/>
            <person name="Airik R."/>
            <person name="Kispert A."/>
            <person name="Braendli A.W."/>
        </authorList>
    </citation>
    <scope>LACK OF RENAL EXPRESSION</scope>
</reference>
<reference key="9">
    <citation type="journal article" date="2008" name="J. Neurosci.">
        <title>Genetic control of circuit function: Vsx1 and Irx5 transcription factors regulate contrast adaptation in the mouse retina.</title>
        <authorList>
            <person name="Kerschensteiner D."/>
            <person name="Liu H."/>
            <person name="Cheng C.W."/>
            <person name="Demas J."/>
            <person name="Cheng S.H."/>
            <person name="Hui C.C."/>
            <person name="Chow R.L."/>
            <person name="Wong R.O.L."/>
        </authorList>
    </citation>
    <scope>POSSIBLE FUNCTION</scope>
</reference>
<comment type="function">
    <text evidence="1">Establishes the cardiac repolarization gradient by its repressive actions on the KCND2 potassium-channel gene. Required for retinal cone bipolar cell differentiation. May regulate contrast adaptation in the retina and control specific aspects of visual function in circuits of the mammalian retina. Involved in craniofacial and gonadal development (By similarity). Modulates the migration of progenitor cell populations in branchial arches and gonads by repressing CXCL12.</text>
</comment>
<comment type="subcellular location">
    <subcellularLocation>
        <location evidence="3">Nucleus</location>
    </subcellularLocation>
</comment>
<comment type="tissue specificity">
    <text>Not expressed in the developing metanephric kidney or adult kidney.</text>
</comment>
<comment type="developmental stage">
    <text evidence="5 6 7">In 9.5 dpc embryos, expressed in the rhombencephalon, metencephalon, and in the cephalic mesoderm surround the optic vesicle. By 12.5 dpc, expression continues in the mesenchyme and also begins in subsets of cells in the neuroretina, becoming expressed in the retinal inner neuroblast layers by 16.5 dpc. Expressed in developing bipolar cells during retinal development starting at postnatal day 5, and expressed in a subset of cone bipolar cells in the mature retina. Also expressed along the spinal cord, in the ventricular layer, in motor neurons and in the proximal limb buds during embryonic development. Expressed in the developing heart in the endocardium that lines the heart chambers.</text>
</comment>
<comment type="disruption phenotype">
    <text evidence="8">Disruption causes increased KCND2 potassium-channel expression in endocardial myocardium leading to abolition of the cardiac repolarization gradient, a selective increase of the major cardiac repolarization current, I(to,f), and increased susceptibility to arrhythmias.</text>
</comment>
<comment type="similarity">
    <text evidence="9">Belongs to the TALE/IRO homeobox family.</text>
</comment>
<comment type="sequence caution" evidence="9">
    <conflict type="frameshift">
        <sequence resource="EMBL-CDS" id="AAF63955"/>
    </conflict>
</comment>
<dbReference type="EMBL" id="AF230074">
    <property type="protein sequence ID" value="AAF42871.1"/>
    <property type="molecule type" value="mRNA"/>
</dbReference>
<dbReference type="EMBL" id="AK004747">
    <property type="protein sequence ID" value="BAB23528.1"/>
    <property type="molecule type" value="mRNA"/>
</dbReference>
<dbReference type="EMBL" id="BC051959">
    <property type="protein sequence ID" value="AAH51959.2"/>
    <property type="molecule type" value="mRNA"/>
</dbReference>
<dbReference type="EMBL" id="BC056994">
    <property type="protein sequence ID" value="AAH56994.1"/>
    <property type="molecule type" value="mRNA"/>
</dbReference>
<dbReference type="EMBL" id="AF165985">
    <property type="protein sequence ID" value="AAF63955.1"/>
    <property type="status" value="ALT_FRAME"/>
    <property type="molecule type" value="mRNA"/>
</dbReference>
<dbReference type="CCDS" id="CCDS22522.1"/>
<dbReference type="RefSeq" id="NP_061296.1">
    <property type="nucleotide sequence ID" value="NM_018826.2"/>
</dbReference>
<dbReference type="SMR" id="Q9JKQ4"/>
<dbReference type="FunCoup" id="Q9JKQ4">
    <property type="interactions" value="1203"/>
</dbReference>
<dbReference type="STRING" id="10090.ENSMUSP00000034184"/>
<dbReference type="GlyGen" id="Q9JKQ4">
    <property type="glycosylation" value="1 site"/>
</dbReference>
<dbReference type="iPTMnet" id="Q9JKQ4"/>
<dbReference type="PhosphoSitePlus" id="Q9JKQ4"/>
<dbReference type="PaxDb" id="10090-ENSMUSP00000034184"/>
<dbReference type="ProteomicsDB" id="267008"/>
<dbReference type="Antibodypedia" id="14623">
    <property type="antibodies" value="225 antibodies from 23 providers"/>
</dbReference>
<dbReference type="DNASU" id="54352"/>
<dbReference type="Ensembl" id="ENSMUST00000034184.12">
    <property type="protein sequence ID" value="ENSMUSP00000034184.10"/>
    <property type="gene ID" value="ENSMUSG00000031737.12"/>
</dbReference>
<dbReference type="GeneID" id="54352"/>
<dbReference type="KEGG" id="mmu:54352"/>
<dbReference type="UCSC" id="uc009mub.1">
    <property type="organism name" value="mouse"/>
</dbReference>
<dbReference type="AGR" id="MGI:1859086"/>
<dbReference type="CTD" id="10265"/>
<dbReference type="MGI" id="MGI:1859086">
    <property type="gene designation" value="Irx5"/>
</dbReference>
<dbReference type="VEuPathDB" id="HostDB:ENSMUSG00000031737"/>
<dbReference type="eggNOG" id="KOG0773">
    <property type="taxonomic scope" value="Eukaryota"/>
</dbReference>
<dbReference type="GeneTree" id="ENSGT00940000159483"/>
<dbReference type="HOGENOM" id="CLU_048118_0_0_1"/>
<dbReference type="InParanoid" id="Q9JKQ4"/>
<dbReference type="OMA" id="CPFPNSA"/>
<dbReference type="OrthoDB" id="81442at9989"/>
<dbReference type="PhylomeDB" id="Q9JKQ4"/>
<dbReference type="TreeFam" id="TF319371"/>
<dbReference type="BioGRID-ORCS" id="54352">
    <property type="hits" value="6 hits in 79 CRISPR screens"/>
</dbReference>
<dbReference type="PRO" id="PR:Q9JKQ4"/>
<dbReference type="Proteomes" id="UP000000589">
    <property type="component" value="Chromosome 8"/>
</dbReference>
<dbReference type="RNAct" id="Q9JKQ4">
    <property type="molecule type" value="protein"/>
</dbReference>
<dbReference type="Bgee" id="ENSMUSG00000031737">
    <property type="expression patterns" value="Expressed in epithelium of cochlear duct and 198 other cell types or tissues"/>
</dbReference>
<dbReference type="ExpressionAtlas" id="Q9JKQ4">
    <property type="expression patterns" value="baseline and differential"/>
</dbReference>
<dbReference type="GO" id="GO:0005634">
    <property type="term" value="C:nucleus"/>
    <property type="evidence" value="ECO:0007669"/>
    <property type="project" value="UniProtKB-SubCell"/>
</dbReference>
<dbReference type="GO" id="GO:0000981">
    <property type="term" value="F:DNA-binding transcription factor activity, RNA polymerase II-specific"/>
    <property type="evidence" value="ECO:0007669"/>
    <property type="project" value="InterPro"/>
</dbReference>
<dbReference type="GO" id="GO:0140297">
    <property type="term" value="F:DNA-binding transcription factor binding"/>
    <property type="evidence" value="ECO:0007669"/>
    <property type="project" value="Ensembl"/>
</dbReference>
<dbReference type="GO" id="GO:0042802">
    <property type="term" value="F:identical protein binding"/>
    <property type="evidence" value="ECO:0007669"/>
    <property type="project" value="Ensembl"/>
</dbReference>
<dbReference type="GO" id="GO:1990837">
    <property type="term" value="F:sequence-specific double-stranded DNA binding"/>
    <property type="evidence" value="ECO:0007669"/>
    <property type="project" value="Ensembl"/>
</dbReference>
<dbReference type="GO" id="GO:0048468">
    <property type="term" value="P:cell development"/>
    <property type="evidence" value="ECO:0000315"/>
    <property type="project" value="MGI"/>
</dbReference>
<dbReference type="GO" id="GO:0048701">
    <property type="term" value="P:embryonic cranial skeleton morphogenesis"/>
    <property type="evidence" value="ECO:0007669"/>
    <property type="project" value="Ensembl"/>
</dbReference>
<dbReference type="GO" id="GO:0008406">
    <property type="term" value="P:gonad development"/>
    <property type="evidence" value="ECO:0007669"/>
    <property type="project" value="Ensembl"/>
</dbReference>
<dbReference type="GO" id="GO:0042551">
    <property type="term" value="P:neuron maturation"/>
    <property type="evidence" value="ECO:0000316"/>
    <property type="project" value="MGI"/>
</dbReference>
<dbReference type="GO" id="GO:0010468">
    <property type="term" value="P:regulation of gene expression"/>
    <property type="evidence" value="ECO:0000315"/>
    <property type="project" value="MGI"/>
</dbReference>
<dbReference type="GO" id="GO:0002027">
    <property type="term" value="P:regulation of heart rate"/>
    <property type="evidence" value="ECO:0000315"/>
    <property type="project" value="MGI"/>
</dbReference>
<dbReference type="GO" id="GO:0060040">
    <property type="term" value="P:retinal bipolar neuron differentiation"/>
    <property type="evidence" value="ECO:0000316"/>
    <property type="project" value="MGI"/>
</dbReference>
<dbReference type="GO" id="GO:0007601">
    <property type="term" value="P:visual perception"/>
    <property type="evidence" value="ECO:0007669"/>
    <property type="project" value="UniProtKB-KW"/>
</dbReference>
<dbReference type="CDD" id="cd00086">
    <property type="entry name" value="homeodomain"/>
    <property type="match status" value="1"/>
</dbReference>
<dbReference type="FunFam" id="1.10.10.60:FF:000003">
    <property type="entry name" value="Iroquois-class homeobox protein IRX"/>
    <property type="match status" value="1"/>
</dbReference>
<dbReference type="Gene3D" id="1.10.10.60">
    <property type="entry name" value="Homeodomain-like"/>
    <property type="match status" value="1"/>
</dbReference>
<dbReference type="InterPro" id="IPR001356">
    <property type="entry name" value="HD"/>
</dbReference>
<dbReference type="InterPro" id="IPR017970">
    <property type="entry name" value="Homeobox_CS"/>
</dbReference>
<dbReference type="InterPro" id="IPR009057">
    <property type="entry name" value="Homeodomain-like_sf"/>
</dbReference>
<dbReference type="InterPro" id="IPR003893">
    <property type="entry name" value="Iroquois_homeo"/>
</dbReference>
<dbReference type="InterPro" id="IPR008422">
    <property type="entry name" value="KN_HD"/>
</dbReference>
<dbReference type="PANTHER" id="PTHR11211">
    <property type="entry name" value="IROQUOIS-CLASS HOMEODOMAIN PROTEIN IRX"/>
    <property type="match status" value="1"/>
</dbReference>
<dbReference type="PANTHER" id="PTHR11211:SF17">
    <property type="entry name" value="IROQUOIS-CLASS HOMEODOMAIN PROTEIN IRX-5"/>
    <property type="match status" value="1"/>
</dbReference>
<dbReference type="Pfam" id="PF05920">
    <property type="entry name" value="Homeobox_KN"/>
    <property type="match status" value="1"/>
</dbReference>
<dbReference type="SMART" id="SM00389">
    <property type="entry name" value="HOX"/>
    <property type="match status" value="1"/>
</dbReference>
<dbReference type="SMART" id="SM00548">
    <property type="entry name" value="IRO"/>
    <property type="match status" value="1"/>
</dbReference>
<dbReference type="SUPFAM" id="SSF46689">
    <property type="entry name" value="Homeodomain-like"/>
    <property type="match status" value="1"/>
</dbReference>
<dbReference type="PROSITE" id="PS00027">
    <property type="entry name" value="HOMEOBOX_1"/>
    <property type="match status" value="1"/>
</dbReference>
<dbReference type="PROSITE" id="PS50071">
    <property type="entry name" value="HOMEOBOX_2"/>
    <property type="match status" value="1"/>
</dbReference>
<feature type="chain" id="PRO_0000049161" description="Iroquois-class homeodomain protein IRX-5">
    <location>
        <begin position="1"/>
        <end position="484"/>
    </location>
</feature>
<feature type="DNA-binding region" description="Homeobox; TALE-type" evidence="3">
    <location>
        <begin position="112"/>
        <end position="174"/>
    </location>
</feature>
<feature type="region of interest" description="Disordered" evidence="4">
    <location>
        <begin position="176"/>
        <end position="393"/>
    </location>
</feature>
<feature type="region of interest" description="Disordered" evidence="4">
    <location>
        <begin position="424"/>
        <end position="443"/>
    </location>
</feature>
<feature type="compositionally biased region" description="Acidic residues" evidence="4">
    <location>
        <begin position="185"/>
        <end position="202"/>
    </location>
</feature>
<feature type="compositionally biased region" description="Basic and acidic residues" evidence="4">
    <location>
        <begin position="203"/>
        <end position="212"/>
    </location>
</feature>
<feature type="compositionally biased region" description="Basic and acidic residues" evidence="4">
    <location>
        <begin position="249"/>
        <end position="265"/>
    </location>
</feature>
<feature type="compositionally biased region" description="Pro residues" evidence="4">
    <location>
        <begin position="318"/>
        <end position="328"/>
    </location>
</feature>
<feature type="compositionally biased region" description="Low complexity" evidence="4">
    <location>
        <begin position="375"/>
        <end position="389"/>
    </location>
</feature>
<feature type="modified residue" description="Phosphoserine" evidence="2">
    <location>
        <position position="273"/>
    </location>
</feature>
<feature type="modified residue" description="Phosphoserine" evidence="2">
    <location>
        <position position="465"/>
    </location>
</feature>
<sequence length="484" mass="50755">MSYPQGYLYQPSASLALYSCPAYSTSVISGPRTDELGRSSSGSAFSPYAGSTAFTAPSPGYNSHLQYGADPAAAAAAAFSYVGSPYDHTPGMAGSLGYHPYAAPLGSYPYGDPAYRKNATRDATATLKAWLNEHRKNPYPTKGEKIMLAIITKMTLTQVSTWFANARRRLKKENKMTWTPRNRSEDEEEEENIDLEKNDEDEPQKPEDKGDLEGPESGGAEQKATAGCERLQGPLSPAGKETEGSLSDSDFKESSSEGRHDELPRPPRAGESSPAGPATARLAEDAGPHYPASVPAPGPHPSAGELPPGSGGSSVIHSPPPPPPPPPAVLAKPKLWSLAEIATSSDKVKDGGGGSEGSPCPPCPGPMGGQTLGGSRASPAPAPARSPSAQCPFPGGTVLSRPLYYTAPFYPGYTNYGSFGHLHGHPGPGPSPTAGPGSHFNGLNQTVLNRADVLAKDPKMLRSQSQLDLCKDSPYELKKGMSDI</sequence>